<reference key="1">
    <citation type="journal article" date="1997" name="Virology">
        <title>The three subunits of the polymerase and the nucleoprotein of influenza B virus are the minimum set of viral proteins required for expression of a model RNA template.</title>
        <authorList>
            <person name="Jambrina E."/>
            <person name="Barcena J."/>
            <person name="Uez O."/>
            <person name="Portela A."/>
        </authorList>
    </citation>
    <scope>NUCLEOTIDE SEQUENCE [MRNA]</scope>
</reference>
<dbReference type="EC" id="2.7.7.48" evidence="1"/>
<dbReference type="EMBL" id="AF005736">
    <property type="protein sequence ID" value="AAB72043.1"/>
    <property type="molecule type" value="mRNA"/>
</dbReference>
<dbReference type="PDB" id="6QWL">
    <property type="method" value="EM"/>
    <property type="resolution" value="4.10 A"/>
    <property type="chains" value="K=1-752"/>
</dbReference>
<dbReference type="PDBsum" id="6QWL"/>
<dbReference type="EMDB" id="EMD-4660"/>
<dbReference type="SMR" id="O36430"/>
<dbReference type="IntAct" id="O36430">
    <property type="interactions" value="1"/>
</dbReference>
<dbReference type="GO" id="GO:0030430">
    <property type="term" value="C:host cell cytoplasm"/>
    <property type="evidence" value="ECO:0007669"/>
    <property type="project" value="UniProtKB-SubCell"/>
</dbReference>
<dbReference type="GO" id="GO:0042025">
    <property type="term" value="C:host cell nucleus"/>
    <property type="evidence" value="ECO:0007669"/>
    <property type="project" value="UniProtKB-SubCell"/>
</dbReference>
<dbReference type="GO" id="GO:0000166">
    <property type="term" value="F:nucleotide binding"/>
    <property type="evidence" value="ECO:0007669"/>
    <property type="project" value="UniProtKB-UniRule"/>
</dbReference>
<dbReference type="GO" id="GO:0003723">
    <property type="term" value="F:RNA binding"/>
    <property type="evidence" value="ECO:0007669"/>
    <property type="project" value="InterPro"/>
</dbReference>
<dbReference type="GO" id="GO:0003968">
    <property type="term" value="F:RNA-directed RNA polymerase activity"/>
    <property type="evidence" value="ECO:0007669"/>
    <property type="project" value="UniProtKB-UniRule"/>
</dbReference>
<dbReference type="GO" id="GO:0006351">
    <property type="term" value="P:DNA-templated transcription"/>
    <property type="evidence" value="ECO:0007669"/>
    <property type="project" value="UniProtKB-UniRule"/>
</dbReference>
<dbReference type="GO" id="GO:0039657">
    <property type="term" value="P:symbiont-mediated suppression of host gene expression"/>
    <property type="evidence" value="ECO:0007669"/>
    <property type="project" value="UniProtKB-KW"/>
</dbReference>
<dbReference type="GO" id="GO:0039523">
    <property type="term" value="P:symbiont-mediated suppression of host mRNA transcription via inhibition of RNA polymerase II activity"/>
    <property type="evidence" value="ECO:0007669"/>
    <property type="project" value="UniProtKB-UniRule"/>
</dbReference>
<dbReference type="GO" id="GO:0039694">
    <property type="term" value="P:viral RNA genome replication"/>
    <property type="evidence" value="ECO:0007669"/>
    <property type="project" value="UniProtKB-UniRule"/>
</dbReference>
<dbReference type="GO" id="GO:0019083">
    <property type="term" value="P:viral transcription"/>
    <property type="evidence" value="ECO:0007669"/>
    <property type="project" value="UniProtKB-KW"/>
</dbReference>
<dbReference type="Gene3D" id="6.10.140.720">
    <property type="match status" value="1"/>
</dbReference>
<dbReference type="HAMAP" id="MF_04065">
    <property type="entry name" value="INFV_RDRP"/>
    <property type="match status" value="1"/>
</dbReference>
<dbReference type="InterPro" id="IPR007099">
    <property type="entry name" value="RNA-dir_pol_NSvirus"/>
</dbReference>
<dbReference type="InterPro" id="IPR001407">
    <property type="entry name" value="RNA_pol_PB1_influenza"/>
</dbReference>
<dbReference type="Pfam" id="PF00602">
    <property type="entry name" value="Flu_PB1"/>
    <property type="match status" value="1"/>
</dbReference>
<dbReference type="PIRSF" id="PIRSF000827">
    <property type="entry name" value="RdRPol_OMV"/>
    <property type="match status" value="1"/>
</dbReference>
<dbReference type="PROSITE" id="PS50525">
    <property type="entry name" value="RDRP_SSRNA_NEG_SEG"/>
    <property type="match status" value="1"/>
</dbReference>
<feature type="chain" id="PRO_0000078775" description="RNA-directed RNA polymerase catalytic subunit">
    <location>
        <begin position="1"/>
        <end position="752"/>
    </location>
</feature>
<feature type="domain" description="RdRp catalytic" evidence="1">
    <location>
        <begin position="286"/>
        <end position="482"/>
    </location>
</feature>
<feature type="region of interest" description="Promoter-binding site" evidence="1">
    <location>
        <begin position="249"/>
        <end position="256"/>
    </location>
</feature>
<feature type="short sequence motif" description="Nuclear localization signal" evidence="1">
    <location>
        <begin position="187"/>
        <end position="195"/>
    </location>
</feature>
<feature type="short sequence motif" description="Nuclear localization signal" evidence="1">
    <location>
        <begin position="203"/>
        <end position="216"/>
    </location>
</feature>
<name>RDRP_INBP9</name>
<gene>
    <name evidence="1" type="primary">PB1</name>
</gene>
<evidence type="ECO:0000255" key="1">
    <source>
        <dbReference type="HAMAP-Rule" id="MF_04065"/>
    </source>
</evidence>
<proteinExistence type="evidence at protein level"/>
<comment type="function">
    <text evidence="1">RNA-dependent RNA polymerase which is responsible for replication and transcription of virus RNA segments. The transcription of viral mRNAs occurs by a unique mechanism called cap-snatching. 5' methylated caps of cellular mRNAs are cleaved after 10-13 nucleotides by PA. In turn, these short capped RNAs are used as primers by PB1 for transcription of viral mRNAs. During virus replication, PB1 initiates RNA synthesis and copy vRNA into complementary RNA (cRNA) which in turn serves as a template for the production of more vRNAs.</text>
</comment>
<comment type="catalytic activity">
    <reaction evidence="1">
        <text>RNA(n) + a ribonucleoside 5'-triphosphate = RNA(n+1) + diphosphate</text>
        <dbReference type="Rhea" id="RHEA:21248"/>
        <dbReference type="Rhea" id="RHEA-COMP:14527"/>
        <dbReference type="Rhea" id="RHEA-COMP:17342"/>
        <dbReference type="ChEBI" id="CHEBI:33019"/>
        <dbReference type="ChEBI" id="CHEBI:61557"/>
        <dbReference type="ChEBI" id="CHEBI:140395"/>
        <dbReference type="EC" id="2.7.7.48"/>
    </reaction>
</comment>
<comment type="subunit">
    <text evidence="1">Influenza RNA polymerase is composed of three subunits: PB1, PB2 and PA. Interacts (via N-terminus) with PA (via C-terminus). Interacts (via C-terminus) with PB2 (via N-terminus); this interaction is essential for transcription initiation.</text>
</comment>
<comment type="subcellular location">
    <subcellularLocation>
        <location evidence="1">Host nucleus</location>
    </subcellularLocation>
    <subcellularLocation>
        <location evidence="1">Host cytoplasm</location>
    </subcellularLocation>
</comment>
<comment type="PTM">
    <text evidence="1">Phosphorylated by host PRKCA.</text>
</comment>
<comment type="similarity">
    <text evidence="1">Belongs to the influenza viruses polymerase PB1 family.</text>
</comment>
<sequence length="752" mass="84269">MNINPYFLFIDVPIQAAISTTFPYTGVPPYSHGTGTGHTIDTVIRTHEYSNKGKQYVSDVTGCTMVDPTNGPLPEDNEPSAYAQLDCVLEALDRMDEEHPGLFQAASQNAMEALMVTTVDKLTQGRQTFDWTVCRNQPAATALNTTITSFRLNDLNGADKGGLVPFCQDIIDSLDKPEMTFFSVKNIKKKLPAKNRKGFLIKRIPMKVKDRITRVEYIKRALSLNTMTKDAERGKLKRRAIATAGIQIRGFVLVVENLAKNICENLEQSGLPVGGNEKKAKLSNAVAKMLSNCPPGGISMTVTGDNTKWNECLNPRIFLAMTERITRDSPIWFRDFCSIAPVLFSNKIARLGKGFMITSKTKRLKAQIPCPDLFSIPLERYNEETRAKLKKLKPFFNEEGTASLSPGMMMGMFNMLSTVLGVAALGIKNIGNKEYLWDGLQSSDDFALFVNAKDEETCMEGINDFYRTCKLLGINMSKKKSYCNETGMFEFTSMFYRDGFVSNFAMEIPSFGVAGVNESADMAIGMTIIKNNMINNGMGPATAQTAIQLFIADYRYTYKCHRGDSKVEGKRMKIIKELWENTKGRDGLLVADGGPNIYNLRNLHIPEIVLKYNLMDPEYKGRLLHPQNPFVGHLSIEGIKEADITPAHGPVKKMDYDAVSGTHSWRTKRNRSILNTDQRNMILEEQCYAKCCNLFEACFNSASYRKPVGQHSMLEAMAHRLRMDARLDYESGRMSKDDFEKAMAHLGEIGYI</sequence>
<protein>
    <recommendedName>
        <fullName evidence="1">RNA-directed RNA polymerase catalytic subunit</fullName>
        <ecNumber evidence="1">2.7.7.48</ecNumber>
    </recommendedName>
    <alternativeName>
        <fullName evidence="1">Polymerase basic protein 1</fullName>
        <shortName evidence="1">PB1</shortName>
    </alternativeName>
    <alternativeName>
        <fullName evidence="1">RNA-directed RNA polymerase subunit P1</fullName>
    </alternativeName>
</protein>
<organismHost>
    <name type="scientific">Homo sapiens</name>
    <name type="common">Human</name>
    <dbReference type="NCBI Taxonomy" id="9606"/>
</organismHost>
<organism>
    <name type="scientific">Influenza B virus (strain B/Panama/45/1990)</name>
    <dbReference type="NCBI Taxonomy" id="408929"/>
    <lineage>
        <taxon>Viruses</taxon>
        <taxon>Riboviria</taxon>
        <taxon>Orthornavirae</taxon>
        <taxon>Negarnaviricota</taxon>
        <taxon>Polyploviricotina</taxon>
        <taxon>Insthoviricetes</taxon>
        <taxon>Articulavirales</taxon>
        <taxon>Orthomyxoviridae</taxon>
        <taxon>Betainfluenzavirus</taxon>
        <taxon>Betainfluenzavirus influenzae</taxon>
        <taxon>Influenza B virus</taxon>
    </lineage>
</organism>
<keyword id="KW-0002">3D-structure</keyword>
<keyword id="KW-1262">Eukaryotic host gene expression shutoff by virus</keyword>
<keyword id="KW-1191">Eukaryotic host transcription shutoff by virus</keyword>
<keyword id="KW-1035">Host cytoplasm</keyword>
<keyword id="KW-1190">Host gene expression shutoff by virus</keyword>
<keyword id="KW-1048">Host nucleus</keyword>
<keyword id="KW-0945">Host-virus interaction</keyword>
<keyword id="KW-1104">Inhibition of host RNA polymerase II by virus</keyword>
<keyword id="KW-0547">Nucleotide-binding</keyword>
<keyword id="KW-0548">Nucleotidyltransferase</keyword>
<keyword id="KW-0597">Phosphoprotein</keyword>
<keyword id="KW-0696">RNA-directed RNA polymerase</keyword>
<keyword id="KW-0808">Transferase</keyword>
<keyword id="KW-0693">Viral RNA replication</keyword>
<keyword id="KW-1195">Viral transcription</keyword>
<accession>O36430</accession>